<feature type="signal peptide" evidence="1">
    <location>
        <begin position="1"/>
        <end position="20"/>
    </location>
</feature>
<feature type="chain" id="PRO_0000005507" description="Torsin-1A">
    <location>
        <begin position="21"/>
        <end position="332"/>
    </location>
</feature>
<feature type="region of interest" description="Interaction with SNAPIN" evidence="1">
    <location>
        <begin position="91"/>
        <end position="251"/>
    </location>
</feature>
<feature type="region of interest" description="Interaction with KLC1" evidence="1">
    <location>
        <begin position="251"/>
        <end position="332"/>
    </location>
</feature>
<feature type="region of interest" description="Interaction with SYNE3" evidence="1">
    <location>
        <begin position="312"/>
        <end position="332"/>
    </location>
</feature>
<feature type="binding site" evidence="3">
    <location>
        <begin position="102"/>
        <end position="109"/>
    </location>
    <ligand>
        <name>ATP</name>
        <dbReference type="ChEBI" id="CHEBI:30616"/>
    </ligand>
</feature>
<feature type="glycosylation site" description="N-linked (GlcNAc...) asparagine" evidence="3">
    <location>
        <position position="143"/>
    </location>
</feature>
<feature type="glycosylation site" description="N-linked (GlcNAc...) asparagine" evidence="3">
    <location>
        <position position="158"/>
    </location>
</feature>
<accession>Q60HG2</accession>
<evidence type="ECO:0000250" key="1"/>
<evidence type="ECO:0000250" key="2">
    <source>
        <dbReference type="UniProtKB" id="O14656"/>
    </source>
</evidence>
<evidence type="ECO:0000255" key="3"/>
<evidence type="ECO:0000305" key="4"/>
<proteinExistence type="evidence at transcript level"/>
<name>TOR1A_MACFA</name>
<organism>
    <name type="scientific">Macaca fascicularis</name>
    <name type="common">Crab-eating macaque</name>
    <name type="synonym">Cynomolgus monkey</name>
    <dbReference type="NCBI Taxonomy" id="9541"/>
    <lineage>
        <taxon>Eukaryota</taxon>
        <taxon>Metazoa</taxon>
        <taxon>Chordata</taxon>
        <taxon>Craniata</taxon>
        <taxon>Vertebrata</taxon>
        <taxon>Euteleostomi</taxon>
        <taxon>Mammalia</taxon>
        <taxon>Eutheria</taxon>
        <taxon>Euarchontoglires</taxon>
        <taxon>Primates</taxon>
        <taxon>Haplorrhini</taxon>
        <taxon>Catarrhini</taxon>
        <taxon>Cercopithecidae</taxon>
        <taxon>Cercopithecinae</taxon>
        <taxon>Macaca</taxon>
    </lineage>
</organism>
<comment type="function">
    <text evidence="2">Protein with chaperone functions important for the control of protein folding, processing, stability and localization as well as for the reduction of misfolded protein aggregates. Involved in the regulation of synaptic vesicle recycling, controls STON2 protein stability in collaboration with the COP9 signalosome complex (CSN). In the nucleus, may link the cytoskeleton with the nuclear envelope, this mechanism seems to be crucial for the control of nuclear polarity, cell movement and, specifically in neurons, nuclear envelope integrity. Participates in the cellular trafficking and may regulate the subcellular location of multipass membrane proteins such as the dopamine transporter SLC6A3, leading to the modulation of dopamine neurotransmission. In the endoplasmic reticulum, plays a role in the quality control of protein folding by increasing clearance of misfolded proteins such as SGCE variants or holding them in an intermediate state for proper refolding. May have a redundant function with TOR1B in non-neural tissues (By similarity).</text>
</comment>
<comment type="catalytic activity">
    <reaction>
        <text>ATP + H2O = ADP + phosphate + H(+)</text>
        <dbReference type="Rhea" id="RHEA:13065"/>
        <dbReference type="ChEBI" id="CHEBI:15377"/>
        <dbReference type="ChEBI" id="CHEBI:15378"/>
        <dbReference type="ChEBI" id="CHEBI:30616"/>
        <dbReference type="ChEBI" id="CHEBI:43474"/>
        <dbReference type="ChEBI" id="CHEBI:456216"/>
    </reaction>
</comment>
<comment type="subunit">
    <text evidence="1">Homohexamer. Interacts with TOR1B; the interaction may be specific of neural tissues. Interacts (ATP-bound) with TOR1AIP1 and TOR1AIP2; the interactions induce ATPase activity. Interacts with KLHL14; preferentially when ATP-free. Interacts with KLC1 (via TPR repeats); the interaction associates TOR1A with the kinesin oligomeric complex. Interacts with COPS4; the interaction associates TOR1A with the CSN complex. Interacts with SNAPIN; the interaction is direct and associates SNAPIN with the CSN complex. Interacts with STON2. Interacts (ATP-bound) with SYNE3 (via KASH domain); the interaction is required for SYNE3 nuclear envelope localization. Interacts with VIM; the interaction associates TOR1A with the cytoskeleton. Interacts with PLEC. Interacts (ATP-bound) with SLC6A3; regulates SLC6A3 transport to the plasma membrane (By similarity).</text>
</comment>
<comment type="subcellular location">
    <subcellularLocation>
        <location evidence="2">Endoplasmic reticulum lumen</location>
    </subcellularLocation>
    <subcellularLocation>
        <location evidence="1">Nucleus membrane</location>
        <topology evidence="1">Peripheral membrane protein</topology>
    </subcellularLocation>
    <subcellularLocation>
        <location evidence="1">Cell projection</location>
        <location evidence="1">Growth cone</location>
    </subcellularLocation>
    <subcellularLocation>
        <location evidence="1">Cytoplasmic vesicle membrane</location>
    </subcellularLocation>
    <subcellularLocation>
        <location evidence="1">Cytoplasmic vesicle</location>
        <location evidence="1">Secretory vesicle</location>
    </subcellularLocation>
    <subcellularLocation>
        <location evidence="1">Cytoplasmic vesicle</location>
        <location evidence="1">Secretory vesicle</location>
        <location evidence="1">Synaptic vesicle</location>
    </subcellularLocation>
    <subcellularLocation>
        <location evidence="1">Cytoplasm</location>
        <location evidence="1">Cytoskeleton</location>
    </subcellularLocation>
    <text evidence="1">Peripherally associated with the inner face of the ER membrane, probably mediated by the interaction with TOR1AIP1. The association with nucleus membrane is mediated by the interaction with TOR1AIP2. Upon oxidative stress, redistributes to protusions from the cell surface (By similarity).</text>
</comment>
<comment type="PTM">
    <text evidence="1">N-glycosylated.</text>
</comment>
<comment type="similarity">
    <text evidence="4">Belongs to the ClpA/ClpB family. Torsin subfamily.</text>
</comment>
<gene>
    <name type="primary">TOR1A</name>
    <name type="synonym">DYT1</name>
    <name type="ORF">QflA-17338</name>
</gene>
<dbReference type="EC" id="3.6.4.-"/>
<dbReference type="EMBL" id="AB125165">
    <property type="protein sequence ID" value="BAD51953.1"/>
    <property type="molecule type" value="mRNA"/>
</dbReference>
<dbReference type="RefSeq" id="NP_001272011.1">
    <property type="nucleotide sequence ID" value="NM_001285082.1"/>
</dbReference>
<dbReference type="RefSeq" id="XP_045229834.1">
    <property type="nucleotide sequence ID" value="XM_045373899.2"/>
</dbReference>
<dbReference type="SMR" id="Q60HG2"/>
<dbReference type="STRING" id="9541.ENSMFAP00000038629"/>
<dbReference type="GlyCosmos" id="Q60HG2">
    <property type="glycosylation" value="2 sites, No reported glycans"/>
</dbReference>
<dbReference type="GeneID" id="102124758"/>
<dbReference type="eggNOG" id="KOG2170">
    <property type="taxonomic scope" value="Eukaryota"/>
</dbReference>
<dbReference type="Proteomes" id="UP000233100">
    <property type="component" value="Unplaced"/>
</dbReference>
<dbReference type="GO" id="GO:0030659">
    <property type="term" value="C:cytoplasmic vesicle membrane"/>
    <property type="evidence" value="ECO:0007669"/>
    <property type="project" value="UniProtKB-SubCell"/>
</dbReference>
<dbReference type="GO" id="GO:0005856">
    <property type="term" value="C:cytoskeleton"/>
    <property type="evidence" value="ECO:0007669"/>
    <property type="project" value="UniProtKB-SubCell"/>
</dbReference>
<dbReference type="GO" id="GO:0005788">
    <property type="term" value="C:endoplasmic reticulum lumen"/>
    <property type="evidence" value="ECO:0000250"/>
    <property type="project" value="UniProtKB"/>
</dbReference>
<dbReference type="GO" id="GO:0005789">
    <property type="term" value="C:endoplasmic reticulum membrane"/>
    <property type="evidence" value="ECO:0000250"/>
    <property type="project" value="UniProtKB"/>
</dbReference>
<dbReference type="GO" id="GO:0030426">
    <property type="term" value="C:growth cone"/>
    <property type="evidence" value="ECO:0000250"/>
    <property type="project" value="UniProtKB"/>
</dbReference>
<dbReference type="GO" id="GO:0005635">
    <property type="term" value="C:nuclear envelope"/>
    <property type="evidence" value="ECO:0000250"/>
    <property type="project" value="UniProtKB"/>
</dbReference>
<dbReference type="GO" id="GO:0031965">
    <property type="term" value="C:nuclear membrane"/>
    <property type="evidence" value="ECO:0007669"/>
    <property type="project" value="UniProtKB-SubCell"/>
</dbReference>
<dbReference type="GO" id="GO:0030141">
    <property type="term" value="C:secretory granule"/>
    <property type="evidence" value="ECO:0000250"/>
    <property type="project" value="UniProtKB"/>
</dbReference>
<dbReference type="GO" id="GO:0008021">
    <property type="term" value="C:synaptic vesicle"/>
    <property type="evidence" value="ECO:0000250"/>
    <property type="project" value="UniProtKB"/>
</dbReference>
<dbReference type="GO" id="GO:0005524">
    <property type="term" value="F:ATP binding"/>
    <property type="evidence" value="ECO:0007669"/>
    <property type="project" value="UniProtKB-KW"/>
</dbReference>
<dbReference type="GO" id="GO:0016887">
    <property type="term" value="F:ATP hydrolysis activity"/>
    <property type="evidence" value="ECO:0000250"/>
    <property type="project" value="UniProtKB"/>
</dbReference>
<dbReference type="GO" id="GO:0140662">
    <property type="term" value="F:ATP-dependent protein folding chaperone"/>
    <property type="evidence" value="ECO:0000250"/>
    <property type="project" value="UniProtKB"/>
</dbReference>
<dbReference type="GO" id="GO:0042802">
    <property type="term" value="F:identical protein binding"/>
    <property type="evidence" value="ECO:0000250"/>
    <property type="project" value="UniProtKB"/>
</dbReference>
<dbReference type="GO" id="GO:0019894">
    <property type="term" value="F:kinesin binding"/>
    <property type="evidence" value="ECO:0007669"/>
    <property type="project" value="TreeGrafter"/>
</dbReference>
<dbReference type="GO" id="GO:0007155">
    <property type="term" value="P:cell adhesion"/>
    <property type="evidence" value="ECO:0000250"/>
    <property type="project" value="UniProtKB"/>
</dbReference>
<dbReference type="GO" id="GO:0051085">
    <property type="term" value="P:chaperone cofactor-dependent protein refolding"/>
    <property type="evidence" value="ECO:0007669"/>
    <property type="project" value="InterPro"/>
</dbReference>
<dbReference type="GO" id="GO:0061077">
    <property type="term" value="P:chaperone-mediated protein folding"/>
    <property type="evidence" value="ECO:0000250"/>
    <property type="project" value="UniProtKB"/>
</dbReference>
<dbReference type="GO" id="GO:0036503">
    <property type="term" value="P:ERAD pathway"/>
    <property type="evidence" value="ECO:0000250"/>
    <property type="project" value="UniProtKB"/>
</dbReference>
<dbReference type="GO" id="GO:0045104">
    <property type="term" value="P:intermediate filament cytoskeleton organization"/>
    <property type="evidence" value="ECO:0000250"/>
    <property type="project" value="UniProtKB"/>
</dbReference>
<dbReference type="GO" id="GO:0031175">
    <property type="term" value="P:neuron projection development"/>
    <property type="evidence" value="ECO:0000250"/>
    <property type="project" value="UniProtKB"/>
</dbReference>
<dbReference type="GO" id="GO:0006998">
    <property type="term" value="P:nuclear envelope organization"/>
    <property type="evidence" value="ECO:0000250"/>
    <property type="project" value="UniProtKB"/>
</dbReference>
<dbReference type="GO" id="GO:0071763">
    <property type="term" value="P:nuclear membrane organization"/>
    <property type="evidence" value="ECO:0000250"/>
    <property type="project" value="UniProtKB"/>
</dbReference>
<dbReference type="GO" id="GO:1900244">
    <property type="term" value="P:positive regulation of synaptic vesicle endocytosis"/>
    <property type="evidence" value="ECO:0000250"/>
    <property type="project" value="UniProtKB"/>
</dbReference>
<dbReference type="GO" id="GO:0000338">
    <property type="term" value="P:protein deneddylation"/>
    <property type="evidence" value="ECO:0000250"/>
    <property type="project" value="UniProtKB"/>
</dbReference>
<dbReference type="GO" id="GO:0034504">
    <property type="term" value="P:protein localization to nucleus"/>
    <property type="evidence" value="ECO:0000250"/>
    <property type="project" value="UniProtKB"/>
</dbReference>
<dbReference type="GO" id="GO:0051584">
    <property type="term" value="P:regulation of dopamine uptake involved in synaptic transmission"/>
    <property type="evidence" value="ECO:0000250"/>
    <property type="project" value="UniProtKB"/>
</dbReference>
<dbReference type="GO" id="GO:2000008">
    <property type="term" value="P:regulation of protein localization to cell surface"/>
    <property type="evidence" value="ECO:0000250"/>
    <property type="project" value="UniProtKB"/>
</dbReference>
<dbReference type="GO" id="GO:0048499">
    <property type="term" value="P:synaptic vesicle membrane organization"/>
    <property type="evidence" value="ECO:0000250"/>
    <property type="project" value="UniProtKB"/>
</dbReference>
<dbReference type="GO" id="GO:0048489">
    <property type="term" value="P:synaptic vesicle transport"/>
    <property type="evidence" value="ECO:0000250"/>
    <property type="project" value="UniProtKB"/>
</dbReference>
<dbReference type="GO" id="GO:0044319">
    <property type="term" value="P:wound healing, spreading of cells"/>
    <property type="evidence" value="ECO:0000250"/>
    <property type="project" value="UniProtKB"/>
</dbReference>
<dbReference type="FunFam" id="3.40.50.300:FF:000743">
    <property type="entry name" value="Torsin"/>
    <property type="match status" value="1"/>
</dbReference>
<dbReference type="Gene3D" id="3.40.50.300">
    <property type="entry name" value="P-loop containing nucleotide triphosphate hydrolases"/>
    <property type="match status" value="1"/>
</dbReference>
<dbReference type="InterPro" id="IPR001270">
    <property type="entry name" value="ClpA/B"/>
</dbReference>
<dbReference type="InterPro" id="IPR027417">
    <property type="entry name" value="P-loop_NTPase"/>
</dbReference>
<dbReference type="InterPro" id="IPR049337">
    <property type="entry name" value="TOR1A_C"/>
</dbReference>
<dbReference type="InterPro" id="IPR010448">
    <property type="entry name" value="Torsin"/>
</dbReference>
<dbReference type="InterPro" id="IPR017378">
    <property type="entry name" value="Torsin_1/2"/>
</dbReference>
<dbReference type="PANTHER" id="PTHR10760">
    <property type="entry name" value="TORSIN"/>
    <property type="match status" value="1"/>
</dbReference>
<dbReference type="PANTHER" id="PTHR10760:SF15">
    <property type="entry name" value="TORSIN-1A"/>
    <property type="match status" value="1"/>
</dbReference>
<dbReference type="Pfam" id="PF21376">
    <property type="entry name" value="TOR1A_C"/>
    <property type="match status" value="1"/>
</dbReference>
<dbReference type="Pfam" id="PF06309">
    <property type="entry name" value="Torsin"/>
    <property type="match status" value="1"/>
</dbReference>
<dbReference type="PIRSF" id="PIRSF038079">
    <property type="entry name" value="Torsin_2A"/>
    <property type="match status" value="1"/>
</dbReference>
<dbReference type="PRINTS" id="PR00300">
    <property type="entry name" value="CLPPROTEASEA"/>
</dbReference>
<dbReference type="SUPFAM" id="SSF52540">
    <property type="entry name" value="P-loop containing nucleoside triphosphate hydrolases"/>
    <property type="match status" value="1"/>
</dbReference>
<protein>
    <recommendedName>
        <fullName>Torsin-1A</fullName>
    </recommendedName>
    <alternativeName>
        <fullName>Dystonia 1 protein</fullName>
    </alternativeName>
    <alternativeName>
        <fullName>Torsin ATPase 1</fullName>
        <ecNumber>3.6.4.-</ecNumber>
    </alternativeName>
    <alternativeName>
        <fullName>Torsin family 1 member A</fullName>
    </alternativeName>
</protein>
<sequence>MKLGRAALGLLLLAPSVVQAVEPISLGLALAGVLTGYIYPRLYCLFAECCGQKRSLSREALQKDLDNKLFGQHLAKKIILNAVFGFINNPKPKKPLTLSLHGWTGTGKNFVSKIIAENIYEGGLNSDYVHLFVATLHFPHASNITLYKDQLQLWIRGNVSACARSIFIFDEMDKMHAGLIDAIKPFLDYYDLVDGVSYQKAIFIFLSNAGAERITDVALDFWRSGKQREDIKLKDIEHALSVSVFNNKNSGFWHSSLIDRNLIDYFVPFLPLEYKHLKMCIRVEMQSRGYETNEDIVSRVAEEMTFFPKEERVFSDKGCKTVFTKLDYYYDD</sequence>
<keyword id="KW-0067">ATP-binding</keyword>
<keyword id="KW-0966">Cell projection</keyword>
<keyword id="KW-0143">Chaperone</keyword>
<keyword id="KW-0963">Cytoplasm</keyword>
<keyword id="KW-0968">Cytoplasmic vesicle</keyword>
<keyword id="KW-0206">Cytoskeleton</keyword>
<keyword id="KW-0256">Endoplasmic reticulum</keyword>
<keyword id="KW-0325">Glycoprotein</keyword>
<keyword id="KW-0378">Hydrolase</keyword>
<keyword id="KW-0472">Membrane</keyword>
<keyword id="KW-0547">Nucleotide-binding</keyword>
<keyword id="KW-0539">Nucleus</keyword>
<keyword id="KW-1185">Reference proteome</keyword>
<keyword id="KW-0732">Signal</keyword>
<keyword id="KW-0770">Synapse</keyword>
<reference key="1">
    <citation type="submission" date="2003-10" db="EMBL/GenBank/DDBJ databases">
        <title>Isolation and characterization of cDNA for macaque neurological disease genes.</title>
        <authorList>
            <person name="Kusuda J."/>
            <person name="Osada N."/>
            <person name="Tanuma R."/>
            <person name="Hirata M."/>
            <person name="Sugano S."/>
            <person name="Hashimoto K."/>
        </authorList>
    </citation>
    <scope>NUCLEOTIDE SEQUENCE [LARGE SCALE MRNA]</scope>
    <source>
        <tissue>Frontal cortex</tissue>
    </source>
</reference>